<dbReference type="EC" id="2.3.1.-" evidence="4"/>
<dbReference type="VEuPathDB" id="FungiDB:C2_06940C_A"/>
<dbReference type="VEuPathDB" id="FungiDB:CAWG_05792"/>
<dbReference type="GO" id="GO:0005789">
    <property type="term" value="C:endoplasmic reticulum membrane"/>
    <property type="evidence" value="ECO:0000314"/>
    <property type="project" value="UniProtKB"/>
</dbReference>
<dbReference type="GO" id="GO:0034737">
    <property type="term" value="F:ergosterol O-acyltransferase activity"/>
    <property type="evidence" value="ECO:0007669"/>
    <property type="project" value="TreeGrafter"/>
</dbReference>
<dbReference type="GO" id="GO:0004772">
    <property type="term" value="F:sterol O-acyltransferase activity"/>
    <property type="evidence" value="ECO:0000314"/>
    <property type="project" value="UniProtKB"/>
</dbReference>
<dbReference type="GO" id="GO:0008203">
    <property type="term" value="P:cholesterol metabolic process"/>
    <property type="evidence" value="ECO:0000314"/>
    <property type="project" value="UniProtKB"/>
</dbReference>
<dbReference type="GO" id="GO:0008204">
    <property type="term" value="P:ergosterol metabolic process"/>
    <property type="evidence" value="ECO:0007669"/>
    <property type="project" value="TreeGrafter"/>
</dbReference>
<dbReference type="InterPro" id="IPR004299">
    <property type="entry name" value="MBOAT_fam"/>
</dbReference>
<dbReference type="InterPro" id="IPR014371">
    <property type="entry name" value="Oat_ACAT_DAG_ARE"/>
</dbReference>
<dbReference type="PANTHER" id="PTHR10408">
    <property type="entry name" value="STEROL O-ACYLTRANSFERASE"/>
    <property type="match status" value="1"/>
</dbReference>
<dbReference type="PANTHER" id="PTHR10408:SF23">
    <property type="entry name" value="STEROL O-ACYLTRANSFERASE 1-RELATED"/>
    <property type="match status" value="1"/>
</dbReference>
<dbReference type="Pfam" id="PF03062">
    <property type="entry name" value="MBOAT"/>
    <property type="match status" value="1"/>
</dbReference>
<dbReference type="PIRSF" id="PIRSF000439">
    <property type="entry name" value="Oat_ACAT_DAG_ARE"/>
    <property type="match status" value="1"/>
</dbReference>
<comment type="function">
    <text evidence="4">Sterol O-acyltransferase that catalyzes the formation of stery esters.</text>
</comment>
<comment type="activity regulation">
    <text evidence="4">Inhibited by the protoberberine derivative HWY-289 in a non-competitive manner. Inhibited by miconazole. Not inhibited by CI-976, polyoxin D, amphotericin B or nikkomycin Z.</text>
</comment>
<comment type="subcellular location">
    <subcellularLocation>
        <location evidence="4">Endoplasmic reticulum membrane</location>
        <topology evidence="2">Multi-pass membrane protein</topology>
    </subcellularLocation>
</comment>
<comment type="induction">
    <text evidence="4">Transcription is induced by HWY-289, but not by CI-976. HWY-289 may deplete protein levels causing an increase in transcription.</text>
</comment>
<comment type="similarity">
    <text evidence="2">Belongs to the membrane-bound acyltransferase family. Sterol o-acyltransferase subfamily.</text>
</comment>
<feature type="chain" id="PRO_0000207649" description="Sterol O-acyltransferase 2">
    <location>
        <begin position="1"/>
        <end position="609"/>
    </location>
</feature>
<feature type="transmembrane region" description="Helical" evidence="2">
    <location>
        <begin position="152"/>
        <end position="172"/>
    </location>
</feature>
<feature type="transmembrane region" description="Helical" evidence="2">
    <location>
        <begin position="195"/>
        <end position="215"/>
    </location>
</feature>
<feature type="transmembrane region" description="Helical" evidence="2">
    <location>
        <begin position="229"/>
        <end position="249"/>
    </location>
</feature>
<feature type="transmembrane region" description="Helical" evidence="2">
    <location>
        <begin position="253"/>
        <end position="273"/>
    </location>
</feature>
<feature type="transmembrane region" description="Helical" evidence="2">
    <location>
        <begin position="402"/>
        <end position="422"/>
    </location>
</feature>
<feature type="transmembrane region" description="Helical" evidence="2">
    <location>
        <begin position="451"/>
        <end position="471"/>
    </location>
</feature>
<feature type="transmembrane region" description="Helical" evidence="2">
    <location>
        <begin position="534"/>
        <end position="554"/>
    </location>
</feature>
<feature type="transmembrane region" description="Helical" evidence="2">
    <location>
        <begin position="589"/>
        <end position="609"/>
    </location>
</feature>
<feature type="region of interest" description="Disordered" evidence="3">
    <location>
        <begin position="1"/>
        <end position="41"/>
    </location>
</feature>
<feature type="short sequence motif" description="FYXDWWN motif" evidence="1">
    <location>
        <begin position="490"/>
        <end position="496"/>
    </location>
</feature>
<feature type="compositionally biased region" description="Polar residues" evidence="3">
    <location>
        <begin position="1"/>
        <end position="15"/>
    </location>
</feature>
<feature type="active site" evidence="1">
    <location>
        <position position="546"/>
    </location>
</feature>
<gene>
    <name evidence="5" type="primary">ARE2</name>
</gene>
<name>ARE2_CANAX</name>
<evidence type="ECO:0000250" key="1">
    <source>
        <dbReference type="UniProtKB" id="P35610"/>
    </source>
</evidence>
<evidence type="ECO:0000255" key="2"/>
<evidence type="ECO:0000256" key="3">
    <source>
        <dbReference type="SAM" id="MobiDB-lite"/>
    </source>
</evidence>
<evidence type="ECO:0000269" key="4">
    <source>
    </source>
</evidence>
<evidence type="ECO:0000303" key="5">
    <source>
    </source>
</evidence>
<evidence type="ECO:0000305" key="6"/>
<protein>
    <recommendedName>
        <fullName>Sterol O-acyltransferase 2</fullName>
        <ecNumber evidence="4">2.3.1.-</ecNumber>
    </recommendedName>
    <alternativeName>
        <fullName>ASAT</fullName>
    </alternativeName>
    <alternativeName>
        <fullName>Sterol-ester synthase</fullName>
    </alternativeName>
</protein>
<organism>
    <name type="scientific">Candida albicans</name>
    <name type="common">Yeast</name>
    <dbReference type="NCBI Taxonomy" id="5476"/>
    <lineage>
        <taxon>Eukaryota</taxon>
        <taxon>Fungi</taxon>
        <taxon>Dikarya</taxon>
        <taxon>Ascomycota</taxon>
        <taxon>Saccharomycotina</taxon>
        <taxon>Pichiomycetes</taxon>
        <taxon>Debaryomycetaceae</taxon>
        <taxon>Candida/Lodderomyces clade</taxon>
        <taxon>Candida</taxon>
    </lineage>
</organism>
<reference evidence="6" key="1">
    <citation type="journal article" date="2004" name="Biochem. Biophys. Res. Commun.">
        <title>Molecular cloning and biochemical characterization of Candida albicans acyl-CoA:sterol acyltransferase, a potential target of antifungal agents.</title>
        <authorList>
            <person name="Kim K.-Y."/>
            <person name="Shin Y.-K."/>
            <person name="Park J.-C."/>
            <person name="Kim J.-H."/>
            <person name="Yang H."/>
            <person name="Han D.-M."/>
            <person name="Paik Y.-K."/>
        </authorList>
    </citation>
    <scope>NUCLEOTIDE SEQUENCE</scope>
    <scope>FUNCTION</scope>
    <scope>ACTIVITY REGULATION</scope>
    <scope>SUBCELLULAR LOCATION</scope>
    <scope>INDUCTION</scope>
    <source>
        <strain>ATCC 10231 / CBS 6431 / CIP 48.72 / DSM 1386 / NBRC 1594</strain>
    </source>
</reference>
<proteinExistence type="evidence at transcript level"/>
<accession>P84285</accession>
<keyword id="KW-0012">Acyltransferase</keyword>
<keyword id="KW-0256">Endoplasmic reticulum</keyword>
<keyword id="KW-0472">Membrane</keyword>
<keyword id="KW-0808">Transferase</keyword>
<keyword id="KW-0812">Transmembrane</keyword>
<keyword id="KW-1133">Transmembrane helix</keyword>
<sequence>MGRTNTSDQLNAISDKNTKRKSLALDNEYHNNSSSEDDSSKIELSYTIPDNNNIISQETTTSVEDVLSLSSAPQNELRLRKQKSNNQDSPVDLNGVIVDVSKREKIFLKRKRQIDNKHGSDKSKYLSRFNDITFKAKSSTIFESDEFYKTDFFGMYVLFWLATAFAMVNNLIHTYFENSTPILQWTVVKVFKRDLFKVGLVDLAMYLSTYFAFFVQYACKNGYLSWKKVGWWLQAAFDGLFLFFWLWIASEYCLDFPWIAKVFLVLHSLVFIMKMHSYAFYNGYLWSIYKEGLYSEKYLDKLTNGKVTLPKGHTKNETEKVLQESIAFTKYELEYQSHATTENPDDHHVFDIDQTDKSIAKLQQEGLIKFPQNITLFNYFEYSMFPTLVYTLNFPRTKRIRWSYVFGKTFGIFGLIFLMILIAENNLYPIVLRCEIARKLPVSERIPQYFFLLMDMIPPFLMVYLFTFFLIWDAILNAIAELSKFADRDFYGPWWSCTDFSEFANQWNRCVHKFLLRHVYHSSISAFDVNKQSAAIITFLLSSLVHELVMYVIFGTLRGYLLLFQMSQIPLIIMSRSKFMKDKKVLGNIICWFGFISGPSIICTLYLVF</sequence>